<keyword id="KW-0066">ATP synthesis</keyword>
<keyword id="KW-0067">ATP-binding</keyword>
<keyword id="KW-0997">Cell inner membrane</keyword>
<keyword id="KW-1003">Cell membrane</keyword>
<keyword id="KW-0139">CF(1)</keyword>
<keyword id="KW-0375">Hydrogen ion transport</keyword>
<keyword id="KW-0406">Ion transport</keyword>
<keyword id="KW-0472">Membrane</keyword>
<keyword id="KW-0547">Nucleotide-binding</keyword>
<keyword id="KW-1278">Translocase</keyword>
<keyword id="KW-0813">Transport</keyword>
<sequence>MDIRAAEISAILKEQIKNFGQEAEVTEVGQVLAVGDGIARVYGLDNVQAGEMVEFESGVRGMALNLEQDNVGVVIFGSDREIKEGQTVKRTGSIVDVPVGKGLLGRVVDGLGNPIDGKGPIQSTERRRVDVKAPGIIPRKSVHEPMSTGLKAIDALIPVGRGQRELIIGDRQTGKTAIALDTILNQKSAHAGADENAKLYCVYVAIGQKRSTVAQFVKVLEDQGALEYSIVIAATASDAAPMQFIAPFAGCAMGEYFRDNGMHAVIVYDDLSKQAVAYRQMSLLLRRPPGREAYPGDVFYLHSRLLERAAKMGDAAGNGSLTALPVIETQANDVSAYIPTNVISITDGQIFLETDLFYQGVRPAVNVGLSVSRVGSSAQTKAMKKVAGKIKGELAQYREMAAFAQFGSDLDVSTQRLLNRGARLTELLKQPQFSPLKMEEQVAVIYAGVNGYLDKLPVGKVRAFEEQLLGTLRSKHQDWLNAVRDSKDLSDANANTLKGVVEATAKSFA</sequence>
<feature type="chain" id="PRO_1000166545" description="ATP synthase subunit alpha">
    <location>
        <begin position="1"/>
        <end position="509"/>
    </location>
</feature>
<feature type="binding site" evidence="1">
    <location>
        <begin position="169"/>
        <end position="176"/>
    </location>
    <ligand>
        <name>ATP</name>
        <dbReference type="ChEBI" id="CHEBI:30616"/>
    </ligand>
</feature>
<feature type="site" description="Required for activity" evidence="1">
    <location>
        <position position="370"/>
    </location>
</feature>
<comment type="function">
    <text evidence="1">Produces ATP from ADP in the presence of a proton gradient across the membrane. The alpha chain is a regulatory subunit.</text>
</comment>
<comment type="catalytic activity">
    <reaction evidence="1">
        <text>ATP + H2O + 4 H(+)(in) = ADP + phosphate + 5 H(+)(out)</text>
        <dbReference type="Rhea" id="RHEA:57720"/>
        <dbReference type="ChEBI" id="CHEBI:15377"/>
        <dbReference type="ChEBI" id="CHEBI:15378"/>
        <dbReference type="ChEBI" id="CHEBI:30616"/>
        <dbReference type="ChEBI" id="CHEBI:43474"/>
        <dbReference type="ChEBI" id="CHEBI:456216"/>
        <dbReference type="EC" id="7.1.2.2"/>
    </reaction>
</comment>
<comment type="subunit">
    <text evidence="1">F-type ATPases have 2 components, CF(1) - the catalytic core - and CF(0) - the membrane proton channel. CF(1) has five subunits: alpha(3), beta(3), gamma(1), delta(1), epsilon(1). CF(0) has three main subunits: a(1), b(2) and c(9-12). The alpha and beta chains form an alternating ring which encloses part of the gamma chain. CF(1) is attached to CF(0) by a central stalk formed by the gamma and epsilon chains, while a peripheral stalk is formed by the delta and b chains.</text>
</comment>
<comment type="subcellular location">
    <subcellularLocation>
        <location evidence="1">Cell inner membrane</location>
        <topology evidence="1">Peripheral membrane protein</topology>
    </subcellularLocation>
</comment>
<comment type="similarity">
    <text evidence="1">Belongs to the ATPase alpha/beta chains family.</text>
</comment>
<organism>
    <name type="scientific">Methylorubrum extorquens (strain CM4 / NCIMB 13688)</name>
    <name type="common">Methylobacterium extorquens</name>
    <dbReference type="NCBI Taxonomy" id="440085"/>
    <lineage>
        <taxon>Bacteria</taxon>
        <taxon>Pseudomonadati</taxon>
        <taxon>Pseudomonadota</taxon>
        <taxon>Alphaproteobacteria</taxon>
        <taxon>Hyphomicrobiales</taxon>
        <taxon>Methylobacteriaceae</taxon>
        <taxon>Methylorubrum</taxon>
    </lineage>
</organism>
<reference key="1">
    <citation type="submission" date="2008-12" db="EMBL/GenBank/DDBJ databases">
        <title>Complete sequence of chromosome of Methylobacterium chloromethanicum CM4.</title>
        <authorList>
            <consortium name="US DOE Joint Genome Institute"/>
            <person name="Lucas S."/>
            <person name="Copeland A."/>
            <person name="Lapidus A."/>
            <person name="Glavina del Rio T."/>
            <person name="Dalin E."/>
            <person name="Tice H."/>
            <person name="Bruce D."/>
            <person name="Goodwin L."/>
            <person name="Pitluck S."/>
            <person name="Chertkov O."/>
            <person name="Brettin T."/>
            <person name="Detter J.C."/>
            <person name="Han C."/>
            <person name="Larimer F."/>
            <person name="Land M."/>
            <person name="Hauser L."/>
            <person name="Kyrpides N."/>
            <person name="Mikhailova N."/>
            <person name="Marx C."/>
            <person name="Richardson P."/>
        </authorList>
    </citation>
    <scope>NUCLEOTIDE SEQUENCE [LARGE SCALE GENOMIC DNA]</scope>
    <source>
        <strain>CM4 / NCIMB 13688</strain>
    </source>
</reference>
<evidence type="ECO:0000255" key="1">
    <source>
        <dbReference type="HAMAP-Rule" id="MF_01346"/>
    </source>
</evidence>
<proteinExistence type="inferred from homology"/>
<accession>B7KUA4</accession>
<name>ATPA_METC4</name>
<dbReference type="EC" id="7.1.2.2" evidence="1"/>
<dbReference type="EMBL" id="CP001298">
    <property type="protein sequence ID" value="ACK82609.1"/>
    <property type="molecule type" value="Genomic_DNA"/>
</dbReference>
<dbReference type="RefSeq" id="WP_003597667.1">
    <property type="nucleotide sequence ID" value="NC_011757.1"/>
</dbReference>
<dbReference type="SMR" id="B7KUA4"/>
<dbReference type="GeneID" id="72989126"/>
<dbReference type="KEGG" id="mch:Mchl_1746"/>
<dbReference type="HOGENOM" id="CLU_010091_2_1_5"/>
<dbReference type="Proteomes" id="UP000002385">
    <property type="component" value="Chromosome"/>
</dbReference>
<dbReference type="GO" id="GO:0005886">
    <property type="term" value="C:plasma membrane"/>
    <property type="evidence" value="ECO:0007669"/>
    <property type="project" value="UniProtKB-SubCell"/>
</dbReference>
<dbReference type="GO" id="GO:0045259">
    <property type="term" value="C:proton-transporting ATP synthase complex"/>
    <property type="evidence" value="ECO:0007669"/>
    <property type="project" value="UniProtKB-KW"/>
</dbReference>
<dbReference type="GO" id="GO:0043531">
    <property type="term" value="F:ADP binding"/>
    <property type="evidence" value="ECO:0007669"/>
    <property type="project" value="TreeGrafter"/>
</dbReference>
<dbReference type="GO" id="GO:0005524">
    <property type="term" value="F:ATP binding"/>
    <property type="evidence" value="ECO:0007669"/>
    <property type="project" value="UniProtKB-UniRule"/>
</dbReference>
<dbReference type="GO" id="GO:0046933">
    <property type="term" value="F:proton-transporting ATP synthase activity, rotational mechanism"/>
    <property type="evidence" value="ECO:0007669"/>
    <property type="project" value="UniProtKB-UniRule"/>
</dbReference>
<dbReference type="CDD" id="cd18113">
    <property type="entry name" value="ATP-synt_F1_alpha_C"/>
    <property type="match status" value="1"/>
</dbReference>
<dbReference type="CDD" id="cd18116">
    <property type="entry name" value="ATP-synt_F1_alpha_N"/>
    <property type="match status" value="1"/>
</dbReference>
<dbReference type="CDD" id="cd01132">
    <property type="entry name" value="F1-ATPase_alpha_CD"/>
    <property type="match status" value="1"/>
</dbReference>
<dbReference type="FunFam" id="1.20.150.20:FF:000001">
    <property type="entry name" value="ATP synthase subunit alpha"/>
    <property type="match status" value="1"/>
</dbReference>
<dbReference type="FunFam" id="2.40.30.20:FF:000001">
    <property type="entry name" value="ATP synthase subunit alpha"/>
    <property type="match status" value="1"/>
</dbReference>
<dbReference type="FunFam" id="3.40.50.300:FF:002432">
    <property type="entry name" value="ATP synthase subunit alpha, mitochondrial"/>
    <property type="match status" value="1"/>
</dbReference>
<dbReference type="Gene3D" id="2.40.30.20">
    <property type="match status" value="1"/>
</dbReference>
<dbReference type="Gene3D" id="1.20.150.20">
    <property type="entry name" value="ATP synthase alpha/beta chain, C-terminal domain"/>
    <property type="match status" value="1"/>
</dbReference>
<dbReference type="Gene3D" id="3.40.50.300">
    <property type="entry name" value="P-loop containing nucleotide triphosphate hydrolases"/>
    <property type="match status" value="1"/>
</dbReference>
<dbReference type="HAMAP" id="MF_01346">
    <property type="entry name" value="ATP_synth_alpha_bact"/>
    <property type="match status" value="1"/>
</dbReference>
<dbReference type="InterPro" id="IPR023366">
    <property type="entry name" value="ATP_synth_asu-like_sf"/>
</dbReference>
<dbReference type="InterPro" id="IPR000793">
    <property type="entry name" value="ATP_synth_asu_C"/>
</dbReference>
<dbReference type="InterPro" id="IPR038376">
    <property type="entry name" value="ATP_synth_asu_C_sf"/>
</dbReference>
<dbReference type="InterPro" id="IPR033732">
    <property type="entry name" value="ATP_synth_F1_a_nt-bd_dom"/>
</dbReference>
<dbReference type="InterPro" id="IPR005294">
    <property type="entry name" value="ATP_synth_F1_asu"/>
</dbReference>
<dbReference type="InterPro" id="IPR020003">
    <property type="entry name" value="ATPase_a/bsu_AS"/>
</dbReference>
<dbReference type="InterPro" id="IPR004100">
    <property type="entry name" value="ATPase_F1/V1/A1_a/bsu_N"/>
</dbReference>
<dbReference type="InterPro" id="IPR036121">
    <property type="entry name" value="ATPase_F1/V1/A1_a/bsu_N_sf"/>
</dbReference>
<dbReference type="InterPro" id="IPR000194">
    <property type="entry name" value="ATPase_F1/V1/A1_a/bsu_nucl-bd"/>
</dbReference>
<dbReference type="InterPro" id="IPR027417">
    <property type="entry name" value="P-loop_NTPase"/>
</dbReference>
<dbReference type="NCBIfam" id="TIGR00962">
    <property type="entry name" value="atpA"/>
    <property type="match status" value="1"/>
</dbReference>
<dbReference type="NCBIfam" id="NF009884">
    <property type="entry name" value="PRK13343.1"/>
    <property type="match status" value="1"/>
</dbReference>
<dbReference type="PANTHER" id="PTHR48082">
    <property type="entry name" value="ATP SYNTHASE SUBUNIT ALPHA, MITOCHONDRIAL"/>
    <property type="match status" value="1"/>
</dbReference>
<dbReference type="PANTHER" id="PTHR48082:SF2">
    <property type="entry name" value="ATP SYNTHASE SUBUNIT ALPHA, MITOCHONDRIAL"/>
    <property type="match status" value="1"/>
</dbReference>
<dbReference type="Pfam" id="PF00006">
    <property type="entry name" value="ATP-synt_ab"/>
    <property type="match status" value="1"/>
</dbReference>
<dbReference type="Pfam" id="PF00306">
    <property type="entry name" value="ATP-synt_ab_C"/>
    <property type="match status" value="1"/>
</dbReference>
<dbReference type="Pfam" id="PF02874">
    <property type="entry name" value="ATP-synt_ab_N"/>
    <property type="match status" value="1"/>
</dbReference>
<dbReference type="PIRSF" id="PIRSF039088">
    <property type="entry name" value="F_ATPase_subunit_alpha"/>
    <property type="match status" value="1"/>
</dbReference>
<dbReference type="SUPFAM" id="SSF47917">
    <property type="entry name" value="C-terminal domain of alpha and beta subunits of F1 ATP synthase"/>
    <property type="match status" value="1"/>
</dbReference>
<dbReference type="SUPFAM" id="SSF50615">
    <property type="entry name" value="N-terminal domain of alpha and beta subunits of F1 ATP synthase"/>
    <property type="match status" value="1"/>
</dbReference>
<dbReference type="SUPFAM" id="SSF52540">
    <property type="entry name" value="P-loop containing nucleoside triphosphate hydrolases"/>
    <property type="match status" value="1"/>
</dbReference>
<dbReference type="PROSITE" id="PS00152">
    <property type="entry name" value="ATPASE_ALPHA_BETA"/>
    <property type="match status" value="1"/>
</dbReference>
<protein>
    <recommendedName>
        <fullName evidence="1">ATP synthase subunit alpha</fullName>
        <ecNumber evidence="1">7.1.2.2</ecNumber>
    </recommendedName>
    <alternativeName>
        <fullName evidence="1">ATP synthase F1 sector subunit alpha</fullName>
    </alternativeName>
    <alternativeName>
        <fullName evidence="1">F-ATPase subunit alpha</fullName>
    </alternativeName>
</protein>
<gene>
    <name evidence="1" type="primary">atpA</name>
    <name type="ordered locus">Mchl_1746</name>
</gene>